<proteinExistence type="inferred from homology"/>
<dbReference type="EC" id="3.5.3.23" evidence="1"/>
<dbReference type="EMBL" id="CP000440">
    <property type="protein sequence ID" value="ABI86624.1"/>
    <property type="molecule type" value="Genomic_DNA"/>
</dbReference>
<dbReference type="RefSeq" id="WP_011656402.1">
    <property type="nucleotide sequence ID" value="NC_008390.1"/>
</dbReference>
<dbReference type="SMR" id="Q0BGU9"/>
<dbReference type="GeneID" id="93083527"/>
<dbReference type="KEGG" id="bam:Bamb_1065"/>
<dbReference type="PATRIC" id="fig|339670.21.peg.503"/>
<dbReference type="eggNOG" id="COG3724">
    <property type="taxonomic scope" value="Bacteria"/>
</dbReference>
<dbReference type="UniPathway" id="UPA00185">
    <property type="reaction ID" value="UER00280"/>
</dbReference>
<dbReference type="Proteomes" id="UP000000662">
    <property type="component" value="Chromosome 1"/>
</dbReference>
<dbReference type="GO" id="GO:0009015">
    <property type="term" value="F:N-succinylarginine dihydrolase activity"/>
    <property type="evidence" value="ECO:0007669"/>
    <property type="project" value="UniProtKB-UniRule"/>
</dbReference>
<dbReference type="GO" id="GO:0019544">
    <property type="term" value="P:arginine catabolic process to glutamate"/>
    <property type="evidence" value="ECO:0007669"/>
    <property type="project" value="UniProtKB-UniRule"/>
</dbReference>
<dbReference type="GO" id="GO:0019545">
    <property type="term" value="P:arginine catabolic process to succinate"/>
    <property type="evidence" value="ECO:0007669"/>
    <property type="project" value="UniProtKB-UniRule"/>
</dbReference>
<dbReference type="Gene3D" id="3.75.10.20">
    <property type="entry name" value="Succinylarginine dihydrolase"/>
    <property type="match status" value="1"/>
</dbReference>
<dbReference type="HAMAP" id="MF_01172">
    <property type="entry name" value="AstB"/>
    <property type="match status" value="1"/>
</dbReference>
<dbReference type="InterPro" id="IPR037031">
    <property type="entry name" value="AstB_sf"/>
</dbReference>
<dbReference type="InterPro" id="IPR007079">
    <property type="entry name" value="SuccinylArg_d-Hdrlase_AstB"/>
</dbReference>
<dbReference type="NCBIfam" id="TIGR03241">
    <property type="entry name" value="arg_catab_astB"/>
    <property type="match status" value="1"/>
</dbReference>
<dbReference type="NCBIfam" id="NF009789">
    <property type="entry name" value="PRK13281.1"/>
    <property type="match status" value="1"/>
</dbReference>
<dbReference type="PANTHER" id="PTHR30420">
    <property type="entry name" value="N-SUCCINYLARGININE DIHYDROLASE"/>
    <property type="match status" value="1"/>
</dbReference>
<dbReference type="PANTHER" id="PTHR30420:SF2">
    <property type="entry name" value="N-SUCCINYLARGININE DIHYDROLASE"/>
    <property type="match status" value="1"/>
</dbReference>
<dbReference type="Pfam" id="PF04996">
    <property type="entry name" value="AstB"/>
    <property type="match status" value="1"/>
</dbReference>
<dbReference type="SUPFAM" id="SSF55909">
    <property type="entry name" value="Pentein"/>
    <property type="match status" value="1"/>
</dbReference>
<sequence length="446" mass="48330">MNAQEANFDGLVGPTHNYAGLSFGNVASLNNEKSAANPKAAAKQGLRKMKQLADLGFAQGVLPPQERPSLRLLRELGFSGKDADVIAKAAKQAPELLAAASSASAMWTANAATVSPSADTGDGRVHFTPANLCSKLHRAIEHDATRRTLSTLFADPAHFAVHEALTGTPALGDEGAANHTRFCAEYGKPGVEFFVYGRAEYRRGPEPKRFPARQTFEASRAVAQRHGLDETATVYAQQDPDVIDAGVFHNDVISVGNRDTLFTHERAFVNKQAIYDTLTATLDARGARLNVIEVPDAAVSVNDAVTSYLFNSQLLSRADGSQVLVVPQECRENAKVAAYLDELAAGNGPIRDVLVFDLRESMKNGGGPACLRLRVVLNDAERAAVTSNVWMNDTLFASLDAWIEKHYRDRLAPEDLADPTLLDESRTALDELTQILRVGSLYDFQR</sequence>
<keyword id="KW-0056">Arginine metabolism</keyword>
<keyword id="KW-0378">Hydrolase</keyword>
<reference key="1">
    <citation type="submission" date="2006-08" db="EMBL/GenBank/DDBJ databases">
        <title>Complete sequence of chromosome 1 of Burkholderia cepacia AMMD.</title>
        <authorList>
            <person name="Copeland A."/>
            <person name="Lucas S."/>
            <person name="Lapidus A."/>
            <person name="Barry K."/>
            <person name="Detter J.C."/>
            <person name="Glavina del Rio T."/>
            <person name="Hammon N."/>
            <person name="Israni S."/>
            <person name="Pitluck S."/>
            <person name="Bruce D."/>
            <person name="Chain P."/>
            <person name="Malfatti S."/>
            <person name="Shin M."/>
            <person name="Vergez L."/>
            <person name="Schmutz J."/>
            <person name="Larimer F."/>
            <person name="Land M."/>
            <person name="Hauser L."/>
            <person name="Kyrpides N."/>
            <person name="Kim E."/>
            <person name="Parke J."/>
            <person name="Coenye T."/>
            <person name="Konstantinidis K."/>
            <person name="Ramette A."/>
            <person name="Tiedje J."/>
            <person name="Richardson P."/>
        </authorList>
    </citation>
    <scope>NUCLEOTIDE SEQUENCE [LARGE SCALE GENOMIC DNA]</scope>
    <source>
        <strain>ATCC BAA-244 / DSM 16087 / CCUG 44356 / LMG 19182 / AMMD</strain>
    </source>
</reference>
<evidence type="ECO:0000255" key="1">
    <source>
        <dbReference type="HAMAP-Rule" id="MF_01172"/>
    </source>
</evidence>
<feature type="chain" id="PRO_1000065715" description="N-succinylarginine dihydrolase">
    <location>
        <begin position="1"/>
        <end position="446"/>
    </location>
</feature>
<feature type="active site" evidence="1">
    <location>
        <position position="174"/>
    </location>
</feature>
<feature type="active site" evidence="1">
    <location>
        <position position="249"/>
    </location>
</feature>
<feature type="active site" description="Nucleophile" evidence="1">
    <location>
        <position position="370"/>
    </location>
</feature>
<feature type="binding site" evidence="1">
    <location>
        <begin position="19"/>
        <end position="28"/>
    </location>
    <ligand>
        <name>substrate</name>
    </ligand>
</feature>
<feature type="binding site" evidence="1">
    <location>
        <position position="110"/>
    </location>
    <ligand>
        <name>substrate</name>
    </ligand>
</feature>
<feature type="binding site" evidence="1">
    <location>
        <begin position="137"/>
        <end position="138"/>
    </location>
    <ligand>
        <name>substrate</name>
    </ligand>
</feature>
<feature type="binding site" evidence="1">
    <location>
        <position position="213"/>
    </location>
    <ligand>
        <name>substrate</name>
    </ligand>
</feature>
<feature type="binding site" evidence="1">
    <location>
        <position position="251"/>
    </location>
    <ligand>
        <name>substrate</name>
    </ligand>
</feature>
<feature type="binding site" evidence="1">
    <location>
        <position position="364"/>
    </location>
    <ligand>
        <name>substrate</name>
    </ligand>
</feature>
<name>ASTB_BURCM</name>
<protein>
    <recommendedName>
        <fullName evidence="1">N-succinylarginine dihydrolase</fullName>
        <ecNumber evidence="1">3.5.3.23</ecNumber>
    </recommendedName>
</protein>
<gene>
    <name evidence="1" type="primary">astB</name>
    <name type="ordered locus">Bamb_1065</name>
</gene>
<comment type="function">
    <text evidence="1">Catalyzes the hydrolysis of N(2)-succinylarginine into N(2)-succinylornithine, ammonia and CO(2).</text>
</comment>
<comment type="catalytic activity">
    <reaction evidence="1">
        <text>N(2)-succinyl-L-arginine + 2 H2O + 2 H(+) = N(2)-succinyl-L-ornithine + 2 NH4(+) + CO2</text>
        <dbReference type="Rhea" id="RHEA:19533"/>
        <dbReference type="ChEBI" id="CHEBI:15377"/>
        <dbReference type="ChEBI" id="CHEBI:15378"/>
        <dbReference type="ChEBI" id="CHEBI:16526"/>
        <dbReference type="ChEBI" id="CHEBI:28938"/>
        <dbReference type="ChEBI" id="CHEBI:58241"/>
        <dbReference type="ChEBI" id="CHEBI:58514"/>
        <dbReference type="EC" id="3.5.3.23"/>
    </reaction>
</comment>
<comment type="pathway">
    <text evidence="1">Amino-acid degradation; L-arginine degradation via AST pathway; L-glutamate and succinate from L-arginine: step 2/5.</text>
</comment>
<comment type="subunit">
    <text evidence="1">Homodimer.</text>
</comment>
<comment type="similarity">
    <text evidence="1">Belongs to the succinylarginine dihydrolase family.</text>
</comment>
<accession>Q0BGU9</accession>
<organism>
    <name type="scientific">Burkholderia ambifaria (strain ATCC BAA-244 / DSM 16087 / CCUG 44356 / LMG 19182 / AMMD)</name>
    <name type="common">Burkholderia cepacia (strain AMMD)</name>
    <dbReference type="NCBI Taxonomy" id="339670"/>
    <lineage>
        <taxon>Bacteria</taxon>
        <taxon>Pseudomonadati</taxon>
        <taxon>Pseudomonadota</taxon>
        <taxon>Betaproteobacteria</taxon>
        <taxon>Burkholderiales</taxon>
        <taxon>Burkholderiaceae</taxon>
        <taxon>Burkholderia</taxon>
        <taxon>Burkholderia cepacia complex</taxon>
    </lineage>
</organism>